<proteinExistence type="evidence at protein level"/>
<name>Y910_MYCTU</name>
<reference key="1">
    <citation type="journal article" date="1998" name="Nature">
        <title>Deciphering the biology of Mycobacterium tuberculosis from the complete genome sequence.</title>
        <authorList>
            <person name="Cole S.T."/>
            <person name="Brosch R."/>
            <person name="Parkhill J."/>
            <person name="Garnier T."/>
            <person name="Churcher C.M."/>
            <person name="Harris D.E."/>
            <person name="Gordon S.V."/>
            <person name="Eiglmeier K."/>
            <person name="Gas S."/>
            <person name="Barry C.E. III"/>
            <person name="Tekaia F."/>
            <person name="Badcock K."/>
            <person name="Basham D."/>
            <person name="Brown D."/>
            <person name="Chillingworth T."/>
            <person name="Connor R."/>
            <person name="Davies R.M."/>
            <person name="Devlin K."/>
            <person name="Feltwell T."/>
            <person name="Gentles S."/>
            <person name="Hamlin N."/>
            <person name="Holroyd S."/>
            <person name="Hornsby T."/>
            <person name="Jagels K."/>
            <person name="Krogh A."/>
            <person name="McLean J."/>
            <person name="Moule S."/>
            <person name="Murphy L.D."/>
            <person name="Oliver S."/>
            <person name="Osborne J."/>
            <person name="Quail M.A."/>
            <person name="Rajandream M.A."/>
            <person name="Rogers J."/>
            <person name="Rutter S."/>
            <person name="Seeger K."/>
            <person name="Skelton S."/>
            <person name="Squares S."/>
            <person name="Squares R."/>
            <person name="Sulston J.E."/>
            <person name="Taylor K."/>
            <person name="Whitehead S."/>
            <person name="Barrell B.G."/>
        </authorList>
    </citation>
    <scope>NUCLEOTIDE SEQUENCE [LARGE SCALE GENOMIC DNA]</scope>
    <source>
        <strain>ATCC 25618 / H37Rv</strain>
    </source>
</reference>
<reference key="2">
    <citation type="journal article" date="2009" name="PLoS Genet.">
        <title>Comprehensive functional analysis of Mycobacterium tuberculosis toxin-antitoxin systems: implications for pathogenesis, stress responses, and evolution.</title>
        <authorList>
            <person name="Ramage H.R."/>
            <person name="Connolly L.E."/>
            <person name="Cox J.S."/>
        </authorList>
    </citation>
    <scope>EXPRESSION IN M.SMEGMATIS</scope>
    <scope>FUNCTION AS A TOXIN</scope>
    <source>
        <strain>ATCC 35801 / TMC 107 / Erdman</strain>
    </source>
</reference>
<reference key="3">
    <citation type="journal article" date="2011" name="Mol. Cell. Proteomics">
        <title>Proteogenomic analysis of Mycobacterium tuberculosis by high resolution mass spectrometry.</title>
        <authorList>
            <person name="Kelkar D.S."/>
            <person name="Kumar D."/>
            <person name="Kumar P."/>
            <person name="Balakrishnan L."/>
            <person name="Muthusamy B."/>
            <person name="Yadav A.K."/>
            <person name="Shrivastava P."/>
            <person name="Marimuthu A."/>
            <person name="Anand S."/>
            <person name="Sundaram H."/>
            <person name="Kingsbury R."/>
            <person name="Harsha H.C."/>
            <person name="Nair B."/>
            <person name="Prasad T.S."/>
            <person name="Chauhan D.S."/>
            <person name="Katoch K."/>
            <person name="Katoch V.M."/>
            <person name="Kumar P."/>
            <person name="Chaerkady R."/>
            <person name="Ramachandran S."/>
            <person name="Dash D."/>
            <person name="Pandey A."/>
        </authorList>
    </citation>
    <scope>IDENTIFICATION BY MASS SPECTROMETRY [LARGE SCALE ANALYSIS]</scope>
    <source>
        <strain>ATCC 25618 / H37Rv</strain>
    </source>
</reference>
<organism>
    <name type="scientific">Mycobacterium tuberculosis (strain ATCC 25618 / H37Rv)</name>
    <dbReference type="NCBI Taxonomy" id="83332"/>
    <lineage>
        <taxon>Bacteria</taxon>
        <taxon>Bacillati</taxon>
        <taxon>Actinomycetota</taxon>
        <taxon>Actinomycetes</taxon>
        <taxon>Mycobacteriales</taxon>
        <taxon>Mycobacteriaceae</taxon>
        <taxon>Mycobacterium</taxon>
        <taxon>Mycobacterium tuberculosis complex</taxon>
    </lineage>
</organism>
<gene>
    <name type="ordered locus">Rv0910</name>
</gene>
<evidence type="ECO:0000269" key="1">
    <source>
    </source>
</evidence>
<comment type="function">
    <text evidence="1">Toxic component of a type II toxin-antitoxin (TA) system. Upon expression in M.smegmatis inhibits colony formation. Its toxic effect is neutralized by coexpression with cognate antitoxin Rv0909. Does not exert its toxic effect via translation.</text>
</comment>
<dbReference type="EMBL" id="AL123456">
    <property type="protein sequence ID" value="CCP43658.1"/>
    <property type="molecule type" value="Genomic_DNA"/>
</dbReference>
<dbReference type="PIR" id="F70581">
    <property type="entry name" value="F70581"/>
</dbReference>
<dbReference type="RefSeq" id="NP_215425.1">
    <property type="nucleotide sequence ID" value="NC_000962.3"/>
</dbReference>
<dbReference type="RefSeq" id="WP_003404726.1">
    <property type="nucleotide sequence ID" value="NZ_NVQJ01000001.1"/>
</dbReference>
<dbReference type="SMR" id="P9WJ05"/>
<dbReference type="STRING" id="83332.Rv0910"/>
<dbReference type="PaxDb" id="83332-Rv0910"/>
<dbReference type="DNASU" id="885137"/>
<dbReference type="GeneID" id="885137"/>
<dbReference type="KEGG" id="mtu:Rv0910"/>
<dbReference type="KEGG" id="mtv:RVBD_0910"/>
<dbReference type="TubercuList" id="Rv0910"/>
<dbReference type="eggNOG" id="COG3427">
    <property type="taxonomic scope" value="Bacteria"/>
</dbReference>
<dbReference type="InParanoid" id="P9WJ05"/>
<dbReference type="OrthoDB" id="3681637at2"/>
<dbReference type="Proteomes" id="UP000001584">
    <property type="component" value="Chromosome"/>
</dbReference>
<dbReference type="GO" id="GO:0045926">
    <property type="term" value="P:negative regulation of growth"/>
    <property type="evidence" value="ECO:0000315"/>
    <property type="project" value="MTBBASE"/>
</dbReference>
<dbReference type="CDD" id="cd07812">
    <property type="entry name" value="SRPBCC"/>
    <property type="match status" value="1"/>
</dbReference>
<dbReference type="FunFam" id="3.30.530.20:FF:000041">
    <property type="entry name" value="Toxin MT0934"/>
    <property type="match status" value="1"/>
</dbReference>
<dbReference type="Gene3D" id="3.30.530.20">
    <property type="match status" value="1"/>
</dbReference>
<dbReference type="InterPro" id="IPR019587">
    <property type="entry name" value="Polyketide_cyclase/dehydratase"/>
</dbReference>
<dbReference type="InterPro" id="IPR023393">
    <property type="entry name" value="START-like_dom_sf"/>
</dbReference>
<dbReference type="Pfam" id="PF10604">
    <property type="entry name" value="Polyketide_cyc2"/>
    <property type="match status" value="1"/>
</dbReference>
<dbReference type="SUPFAM" id="SSF55961">
    <property type="entry name" value="Bet v1-like"/>
    <property type="match status" value="1"/>
</dbReference>
<protein>
    <recommendedName>
        <fullName>Toxin Rv0910</fullName>
    </recommendedName>
</protein>
<accession>P9WJ05</accession>
<accession>L0T7V9</accession>
<accession>O05902</accession>
<accession>Q7D942</accession>
<feature type="chain" id="PRO_0000406885" description="Toxin Rv0910">
    <location>
        <begin position="1"/>
        <end position="144"/>
    </location>
</feature>
<sequence length="144" mass="15754">MAKLSGSIDVPLPPEEAWMHASDLTRYREWLTIHKVWRSKLPEVLEKGTVVESYVEVKGMPNRIKWTIVRYKPPEGMTLNGDGVGGVKVKLIAKVAPKEHGSVVSFDVHLGGPALLGPIGMIVAAALRADIRESLQNFVTVFAG</sequence>
<keyword id="KW-1185">Reference proteome</keyword>
<keyword id="KW-1277">Toxin-antitoxin system</keyword>